<proteinExistence type="inferred from homology"/>
<keyword id="KW-0029">Amino-acid transport</keyword>
<keyword id="KW-0997">Cell inner membrane</keyword>
<keyword id="KW-1003">Cell membrane</keyword>
<keyword id="KW-0472">Membrane</keyword>
<keyword id="KW-0769">Symport</keyword>
<keyword id="KW-0812">Transmembrane</keyword>
<keyword id="KW-1133">Transmembrane helix</keyword>
<keyword id="KW-0813">Transport</keyword>
<feature type="chain" id="PRO_1000069284" description="Serine/threonine transporter SstT">
    <location>
        <begin position="1"/>
        <end position="409"/>
    </location>
</feature>
<feature type="transmembrane region" description="Helical" evidence="1">
    <location>
        <begin position="17"/>
        <end position="37"/>
    </location>
</feature>
<feature type="transmembrane region" description="Helical" evidence="1">
    <location>
        <begin position="49"/>
        <end position="69"/>
    </location>
</feature>
<feature type="transmembrane region" description="Helical" evidence="1">
    <location>
        <begin position="83"/>
        <end position="103"/>
    </location>
</feature>
<feature type="transmembrane region" description="Helical" evidence="1">
    <location>
        <begin position="142"/>
        <end position="162"/>
    </location>
</feature>
<feature type="transmembrane region" description="Helical" evidence="1">
    <location>
        <begin position="180"/>
        <end position="200"/>
    </location>
</feature>
<feature type="transmembrane region" description="Helical" evidence="1">
    <location>
        <begin position="218"/>
        <end position="238"/>
    </location>
</feature>
<feature type="transmembrane region" description="Helical" evidence="1">
    <location>
        <begin position="299"/>
        <end position="319"/>
    </location>
</feature>
<feature type="transmembrane region" description="Helical" evidence="1">
    <location>
        <begin position="331"/>
        <end position="351"/>
    </location>
</feature>
<feature type="transmembrane region" description="Helical" evidence="1">
    <location>
        <begin position="357"/>
        <end position="377"/>
    </location>
</feature>
<evidence type="ECO:0000255" key="1">
    <source>
        <dbReference type="HAMAP-Rule" id="MF_01582"/>
    </source>
</evidence>
<gene>
    <name evidence="1" type="primary">sstT</name>
    <name type="ordered locus">PSPA7_3245</name>
</gene>
<comment type="function">
    <text evidence="1">Involved in the import of serine and threonine into the cell, with the concomitant import of sodium (symport system).</text>
</comment>
<comment type="catalytic activity">
    <reaction evidence="1">
        <text>L-serine(in) + Na(+)(in) = L-serine(out) + Na(+)(out)</text>
        <dbReference type="Rhea" id="RHEA:29575"/>
        <dbReference type="ChEBI" id="CHEBI:29101"/>
        <dbReference type="ChEBI" id="CHEBI:33384"/>
    </reaction>
    <physiologicalReaction direction="right-to-left" evidence="1">
        <dbReference type="Rhea" id="RHEA:29577"/>
    </physiologicalReaction>
</comment>
<comment type="catalytic activity">
    <reaction evidence="1">
        <text>L-threonine(in) + Na(+)(in) = L-threonine(out) + Na(+)(out)</text>
        <dbReference type="Rhea" id="RHEA:69999"/>
        <dbReference type="ChEBI" id="CHEBI:29101"/>
        <dbReference type="ChEBI" id="CHEBI:57926"/>
    </reaction>
    <physiologicalReaction direction="right-to-left" evidence="1">
        <dbReference type="Rhea" id="RHEA:70001"/>
    </physiologicalReaction>
</comment>
<comment type="subcellular location">
    <subcellularLocation>
        <location evidence="1">Cell inner membrane</location>
        <topology evidence="1">Multi-pass membrane protein</topology>
    </subcellularLocation>
</comment>
<comment type="similarity">
    <text evidence="1">Belongs to the dicarboxylate/amino acid:cation symporter (DAACS) (TC 2.A.23) family.</text>
</comment>
<reference key="1">
    <citation type="submission" date="2007-06" db="EMBL/GenBank/DDBJ databases">
        <authorList>
            <person name="Dodson R.J."/>
            <person name="Harkins D."/>
            <person name="Paulsen I.T."/>
        </authorList>
    </citation>
    <scope>NUCLEOTIDE SEQUENCE [LARGE SCALE GENOMIC DNA]</scope>
    <source>
        <strain>DSM 24068 / PA7</strain>
    </source>
</reference>
<dbReference type="EMBL" id="CP000744">
    <property type="protein sequence ID" value="ABR85738.1"/>
    <property type="molecule type" value="Genomic_DNA"/>
</dbReference>
<dbReference type="RefSeq" id="WP_003156577.1">
    <property type="nucleotide sequence ID" value="NC_009656.1"/>
</dbReference>
<dbReference type="SMR" id="A6V6C0"/>
<dbReference type="GeneID" id="77221372"/>
<dbReference type="KEGG" id="pap:PSPA7_3245"/>
<dbReference type="HOGENOM" id="CLU_044581_0_0_6"/>
<dbReference type="Proteomes" id="UP000001582">
    <property type="component" value="Chromosome"/>
</dbReference>
<dbReference type="GO" id="GO:0005886">
    <property type="term" value="C:plasma membrane"/>
    <property type="evidence" value="ECO:0007669"/>
    <property type="project" value="UniProtKB-SubCell"/>
</dbReference>
<dbReference type="GO" id="GO:0005295">
    <property type="term" value="F:neutral L-amino acid:sodium symporter activity"/>
    <property type="evidence" value="ECO:0007669"/>
    <property type="project" value="TreeGrafter"/>
</dbReference>
<dbReference type="GO" id="GO:0032329">
    <property type="term" value="P:serine transport"/>
    <property type="evidence" value="ECO:0007669"/>
    <property type="project" value="InterPro"/>
</dbReference>
<dbReference type="GO" id="GO:0015826">
    <property type="term" value="P:threonine transport"/>
    <property type="evidence" value="ECO:0007669"/>
    <property type="project" value="InterPro"/>
</dbReference>
<dbReference type="FunFam" id="1.10.3860.10:FF:000003">
    <property type="entry name" value="Serine/threonine transporter sstT"/>
    <property type="match status" value="1"/>
</dbReference>
<dbReference type="Gene3D" id="1.10.3860.10">
    <property type="entry name" value="Sodium:dicarboxylate symporter"/>
    <property type="match status" value="1"/>
</dbReference>
<dbReference type="HAMAP" id="MF_01582">
    <property type="entry name" value="Ser_Thr_transp_SstT"/>
    <property type="match status" value="1"/>
</dbReference>
<dbReference type="InterPro" id="IPR001991">
    <property type="entry name" value="Na-dicarboxylate_symporter"/>
</dbReference>
<dbReference type="InterPro" id="IPR036458">
    <property type="entry name" value="Na:dicarbo_symporter_sf"/>
</dbReference>
<dbReference type="InterPro" id="IPR023025">
    <property type="entry name" value="Ser_Thr_transp_SstT"/>
</dbReference>
<dbReference type="NCBIfam" id="NF010151">
    <property type="entry name" value="PRK13628.1"/>
    <property type="match status" value="1"/>
</dbReference>
<dbReference type="PANTHER" id="PTHR42865">
    <property type="entry name" value="PROTON/GLUTAMATE-ASPARTATE SYMPORTER"/>
    <property type="match status" value="1"/>
</dbReference>
<dbReference type="PANTHER" id="PTHR42865:SF8">
    <property type="entry name" value="SERINE_THREONINE TRANSPORTER SSTT"/>
    <property type="match status" value="1"/>
</dbReference>
<dbReference type="Pfam" id="PF00375">
    <property type="entry name" value="SDF"/>
    <property type="match status" value="1"/>
</dbReference>
<dbReference type="PRINTS" id="PR00173">
    <property type="entry name" value="EDTRNSPORT"/>
</dbReference>
<dbReference type="SUPFAM" id="SSF118215">
    <property type="entry name" value="Proton glutamate symport protein"/>
    <property type="match status" value="1"/>
</dbReference>
<protein>
    <recommendedName>
        <fullName evidence="1">Serine/threonine transporter SstT</fullName>
    </recommendedName>
    <alternativeName>
        <fullName evidence="1">Na(+)/serine-threonine symporter</fullName>
    </alternativeName>
</protein>
<name>SSTT_PSEP7</name>
<organism>
    <name type="scientific">Pseudomonas paraeruginosa (strain DSM 24068 / PA7)</name>
    <name type="common">Pseudomonas aeruginosa (strain PA7)</name>
    <dbReference type="NCBI Taxonomy" id="381754"/>
    <lineage>
        <taxon>Bacteria</taxon>
        <taxon>Pseudomonadati</taxon>
        <taxon>Pseudomonadota</taxon>
        <taxon>Gammaproteobacteria</taxon>
        <taxon>Pseudomonadales</taxon>
        <taxon>Pseudomonadaceae</taxon>
        <taxon>Pseudomonas</taxon>
        <taxon>Pseudomonas paraeruginosa</taxon>
    </lineage>
</organism>
<sequence>MTYPERPLLHLLTRTSLVVQIIVGLVAGLLLASFFPAAALKVGFIGKVFVSALKAVAPVLVFVLVMASIANHKQGQQTHIRPILLLYLVGTFSAAVVAVIASFAFPSSLVLASQPGEMSPPGGIAEVLQALLLSVVDNPVNALISANFIGILAWAIGLGIAFRHASDSTRNLLSELSGGVSLIVKVVIRFAPLGIFGLVASTFAESGVEALKGYAHLLVVLLGCMLFVAFVVNPLIVFLKIRRNPYPLVLTCLRESGMTAFFTRSSAANIPVNLQLCERLGLHEDTYSVSIPLGATINMAGAAITITVLTLAAVHTLGIDVDVPTAILLSVVASVCACGASGVAGGSLLLIPLACSLFGIPSEVAMQVVAVGFIIAILQDSAETALNSSTDVLFTAAACQAEERKASAA</sequence>
<accession>A6V6C0</accession>